<name>ESA1_CRYNJ</name>
<organism>
    <name type="scientific">Cryptococcus neoformans var. neoformans serotype D (strain JEC21 / ATCC MYA-565)</name>
    <name type="common">Filobasidiella neoformans</name>
    <dbReference type="NCBI Taxonomy" id="214684"/>
    <lineage>
        <taxon>Eukaryota</taxon>
        <taxon>Fungi</taxon>
        <taxon>Dikarya</taxon>
        <taxon>Basidiomycota</taxon>
        <taxon>Agaricomycotina</taxon>
        <taxon>Tremellomycetes</taxon>
        <taxon>Tremellales</taxon>
        <taxon>Cryptococcaceae</taxon>
        <taxon>Cryptococcus</taxon>
        <taxon>Cryptococcus neoformans species complex</taxon>
    </lineage>
</organism>
<feature type="chain" id="PRO_0000051555" description="Histone acetyltransferase ESA1">
    <location>
        <begin position="1"/>
        <end position="564"/>
    </location>
</feature>
<feature type="domain" description="Tudor-knot" evidence="4">
    <location>
        <begin position="36"/>
        <end position="112"/>
    </location>
</feature>
<feature type="domain" description="MYST-type HAT" evidence="5">
    <location>
        <begin position="281"/>
        <end position="552"/>
    </location>
</feature>
<feature type="zinc finger region" description="C2HC MYST-type" evidence="5">
    <location>
        <begin position="314"/>
        <end position="339"/>
    </location>
</feature>
<feature type="region of interest" description="Disordered" evidence="6">
    <location>
        <begin position="1"/>
        <end position="31"/>
    </location>
</feature>
<feature type="region of interest" description="Disordered" evidence="6">
    <location>
        <begin position="47"/>
        <end position="88"/>
    </location>
</feature>
<feature type="region of interest" description="Disordered" evidence="6">
    <location>
        <begin position="113"/>
        <end position="259"/>
    </location>
</feature>
<feature type="short sequence motif" description="ESA1-RPD3 motif" evidence="1">
    <location>
        <begin position="364"/>
        <end position="385"/>
    </location>
</feature>
<feature type="compositionally biased region" description="Pro residues" evidence="6">
    <location>
        <begin position="72"/>
        <end position="83"/>
    </location>
</feature>
<feature type="compositionally biased region" description="Basic and acidic residues" evidence="6">
    <location>
        <begin position="113"/>
        <end position="128"/>
    </location>
</feature>
<feature type="compositionally biased region" description="Low complexity" evidence="6">
    <location>
        <begin position="156"/>
        <end position="176"/>
    </location>
</feature>
<feature type="compositionally biased region" description="Acidic residues" evidence="6">
    <location>
        <begin position="203"/>
        <end position="228"/>
    </location>
</feature>
<feature type="active site" description="Proton donor/acceptor" evidence="3">
    <location>
        <position position="457"/>
    </location>
</feature>
<feature type="binding site" evidence="3">
    <location>
        <begin position="422"/>
        <end position="426"/>
    </location>
    <ligand>
        <name>acetyl-CoA</name>
        <dbReference type="ChEBI" id="CHEBI:57288"/>
    </ligand>
</feature>
<feature type="binding site" evidence="3">
    <location>
        <begin position="431"/>
        <end position="437"/>
    </location>
    <ligand>
        <name>acetyl-CoA</name>
        <dbReference type="ChEBI" id="CHEBI:57288"/>
    </ligand>
</feature>
<feature type="binding site" evidence="3">
    <location>
        <position position="461"/>
    </location>
    <ligand>
        <name>acetyl-CoA</name>
        <dbReference type="ChEBI" id="CHEBI:57288"/>
    </ligand>
</feature>
<feature type="site" description="Important for catalytic activity" evidence="3">
    <location>
        <position position="423"/>
    </location>
</feature>
<feature type="modified residue" description="N6-acetyllysine; by autocatalysis" evidence="3">
    <location>
        <position position="381"/>
    </location>
</feature>
<protein>
    <recommendedName>
        <fullName>Histone acetyltransferase ESA1</fullName>
        <ecNumber evidence="3">2.3.1.48</ecNumber>
    </recommendedName>
    <alternativeName>
        <fullName evidence="7">Protein 2-hydroxyisobutyryltransferase ESA1</fullName>
        <ecNumber evidence="2">2.3.1.-</ecNumber>
    </alternativeName>
    <alternativeName>
        <fullName evidence="7">Protein acetyltransferase ESA1</fullName>
        <ecNumber evidence="3">2.3.1.-</ecNumber>
    </alternativeName>
    <alternativeName>
        <fullName evidence="7">Protein crotonyltransferase ESA1</fullName>
        <ecNumber evidence="3">2.3.1.-</ecNumber>
    </alternativeName>
</protein>
<gene>
    <name type="primary">ESA1</name>
    <name type="ordered locus">CNB03160</name>
</gene>
<sequence>MSPSAPSTPHGRGSGSEPGTPAPSVAAGGSYTIDDVVPGVKIYVIKPLSNGQAEQRRAEILSTRPKPKPSAFAPPPPPNAPSPDPRDDTEYYVHYVEFNKRLDEWVGGSRLVLSKEMEWPKSKDEPKKKDRPAKAQPSKAPSRATGSPIPSDSLLKKAANKAAMAAGKATPGKAMPSSKLGKASKIGKAGKFPQKRKAKTEADTEAEEESNEDNDALGEEEDMDEDGDVTLITSDGAIDPSREVVAAPSNPRAAPQVFSKKQEIEKLRTSGSMTQSHSEISRVKNLNKLQIGKHEVETWYFSPYPIEYAHLPVLYICEFCLLYYPSATQLRRHRAKCTLLHPPGNEIYRHEGISFFEIDGRKQRTWCRNLCLISKCFLDHKTLYYDVDPFLYYCMTVKDDYGCHLIGYFSKEKESAEGYNVACILTLPQHQRKGYGRLLIEFSYELSKVEGKLGSPEKPLSDLGLLGYRAYWQEKIVELLLDSDYEISLDEIAQKTSITHGDIMHTCQALQMIKYYKNSHIIHLTDAVIEQHKKTKAKPRRAINPAYLKWKPPVFSRAQLAFGF</sequence>
<keyword id="KW-0007">Acetylation</keyword>
<keyword id="KW-0010">Activator</keyword>
<keyword id="KW-0156">Chromatin regulator</keyword>
<keyword id="KW-0158">Chromosome</keyword>
<keyword id="KW-0227">DNA damage</keyword>
<keyword id="KW-0234">DNA repair</keyword>
<keyword id="KW-0479">Metal-binding</keyword>
<keyword id="KW-0539">Nucleus</keyword>
<keyword id="KW-1185">Reference proteome</keyword>
<keyword id="KW-0804">Transcription</keyword>
<keyword id="KW-0805">Transcription regulation</keyword>
<keyword id="KW-0808">Transferase</keyword>
<keyword id="KW-0862">Zinc</keyword>
<keyword id="KW-0863">Zinc-finger</keyword>
<proteinExistence type="inferred from homology"/>
<comment type="function">
    <text evidence="2 3">Catalytic component of the NuA4 histone acetyltransferase (HAT) complex which is involved in epigenetic transcriptional activation of selected genes principally by acetylation of nucleosomal histones H4, H3, H2B, H2A and H2A variant H2A.Z (By similarity). Acetylates histone H4 to form H4K5ac, H4K8ac, H4K12ac and H4K16ac, histone H3 to form H3K14ac, and histone H2A to form H2AK4ac and H2AK7ac (By similarity). The NuA4 complex is involved in the DNA damage response and is required for chromosome segregation. The NuA4 complex plays a direct role in repair of DNA double-strand breaks (DSBs) through homologous recombination (By similarity). Recruitment to promoters depends on H3K4me. Also acetylates non-histone proteins (By similarity). In addition to protein acetyltransferase, can use different acyl-CoA substrates, such as 2-hydroxyisobutanoyl-CoA (2-hydroxyisobutyryl-CoA) or (2E)-butenoyl-CoA (crotonyl-CoA), and is able to mediate protein 2-hydroxyisobutyrylation and crotonylation, respectively (By similarity).</text>
</comment>
<comment type="catalytic activity">
    <reaction evidence="2">
        <text>L-lysyl-[histone] + acetyl-CoA = N(6)-acetyl-L-lysyl-[histone] + CoA + H(+)</text>
        <dbReference type="Rhea" id="RHEA:21992"/>
        <dbReference type="Rhea" id="RHEA-COMP:9845"/>
        <dbReference type="Rhea" id="RHEA-COMP:11338"/>
        <dbReference type="ChEBI" id="CHEBI:15378"/>
        <dbReference type="ChEBI" id="CHEBI:29969"/>
        <dbReference type="ChEBI" id="CHEBI:57287"/>
        <dbReference type="ChEBI" id="CHEBI:57288"/>
        <dbReference type="ChEBI" id="CHEBI:61930"/>
        <dbReference type="EC" id="2.3.1.48"/>
    </reaction>
    <physiologicalReaction direction="left-to-right" evidence="2">
        <dbReference type="Rhea" id="RHEA:21993"/>
    </physiologicalReaction>
</comment>
<comment type="catalytic activity">
    <reaction evidence="3">
        <text>L-lysyl-[protein] + acetyl-CoA = N(6)-acetyl-L-lysyl-[protein] + CoA + H(+)</text>
        <dbReference type="Rhea" id="RHEA:45948"/>
        <dbReference type="Rhea" id="RHEA-COMP:9752"/>
        <dbReference type="Rhea" id="RHEA-COMP:10731"/>
        <dbReference type="ChEBI" id="CHEBI:15378"/>
        <dbReference type="ChEBI" id="CHEBI:29969"/>
        <dbReference type="ChEBI" id="CHEBI:57287"/>
        <dbReference type="ChEBI" id="CHEBI:57288"/>
        <dbReference type="ChEBI" id="CHEBI:61930"/>
    </reaction>
    <physiologicalReaction direction="left-to-right" evidence="3">
        <dbReference type="Rhea" id="RHEA:45949"/>
    </physiologicalReaction>
</comment>
<comment type="catalytic activity">
    <reaction evidence="2">
        <text>2-hydroxyisobutanoyl-CoA + L-lysyl-[protein] = N(6)-(2-hydroxyisobutanoyl)-L-lysyl-[protein] + CoA + H(+)</text>
        <dbReference type="Rhea" id="RHEA:24180"/>
        <dbReference type="Rhea" id="RHEA-COMP:9752"/>
        <dbReference type="Rhea" id="RHEA-COMP:15921"/>
        <dbReference type="ChEBI" id="CHEBI:15378"/>
        <dbReference type="ChEBI" id="CHEBI:29969"/>
        <dbReference type="ChEBI" id="CHEBI:57287"/>
        <dbReference type="ChEBI" id="CHEBI:131780"/>
        <dbReference type="ChEBI" id="CHEBI:144968"/>
    </reaction>
    <physiologicalReaction direction="left-to-right" evidence="2">
        <dbReference type="Rhea" id="RHEA:24181"/>
    </physiologicalReaction>
</comment>
<comment type="catalytic activity">
    <reaction evidence="3">
        <text>(2E)-butenoyl-CoA + L-lysyl-[protein] = N(6)-(2E)-butenoyl-L-lysyl-[protein] + CoA + H(+)</text>
        <dbReference type="Rhea" id="RHEA:53908"/>
        <dbReference type="Rhea" id="RHEA-COMP:9752"/>
        <dbReference type="Rhea" id="RHEA-COMP:13707"/>
        <dbReference type="ChEBI" id="CHEBI:15378"/>
        <dbReference type="ChEBI" id="CHEBI:29969"/>
        <dbReference type="ChEBI" id="CHEBI:57287"/>
        <dbReference type="ChEBI" id="CHEBI:57332"/>
        <dbReference type="ChEBI" id="CHEBI:137954"/>
    </reaction>
    <physiologicalReaction direction="left-to-right" evidence="3">
        <dbReference type="Rhea" id="RHEA:53909"/>
    </physiologicalReaction>
</comment>
<comment type="subunit">
    <text evidence="3">Component of the NuA4 histone acetyltransferase complex.</text>
</comment>
<comment type="subcellular location">
    <subcellularLocation>
        <location evidence="2">Nucleus</location>
    </subcellularLocation>
    <subcellularLocation>
        <location evidence="2">Chromosome</location>
    </subcellularLocation>
    <text evidence="2">Following DNA damage, localizes to sites of DNA damage, such as double stand breaks (DSBs).</text>
</comment>
<comment type="domain">
    <text evidence="3">The ESA1-RPD3 motif is common to ESA1 and RPD3 and is required for ESA1 histone acetyl-transferase (HAT) activity and RPD3 histone deacetylase (HDAC) activity.</text>
</comment>
<comment type="PTM">
    <text evidence="3">Autoacetylation at Lys-381 is required for proper function.</text>
</comment>
<comment type="similarity">
    <text evidence="7">Belongs to the MYST (SAS/MOZ) family.</text>
</comment>
<reference key="1">
    <citation type="journal article" date="2005" name="Science">
        <title>The genome of the basidiomycetous yeast and human pathogen Cryptococcus neoformans.</title>
        <authorList>
            <person name="Loftus B.J."/>
            <person name="Fung E."/>
            <person name="Roncaglia P."/>
            <person name="Rowley D."/>
            <person name="Amedeo P."/>
            <person name="Bruno D."/>
            <person name="Vamathevan J."/>
            <person name="Miranda M."/>
            <person name="Anderson I.J."/>
            <person name="Fraser J.A."/>
            <person name="Allen J.E."/>
            <person name="Bosdet I.E."/>
            <person name="Brent M.R."/>
            <person name="Chiu R."/>
            <person name="Doering T.L."/>
            <person name="Donlin M.J."/>
            <person name="D'Souza C.A."/>
            <person name="Fox D.S."/>
            <person name="Grinberg V."/>
            <person name="Fu J."/>
            <person name="Fukushima M."/>
            <person name="Haas B.J."/>
            <person name="Huang J.C."/>
            <person name="Janbon G."/>
            <person name="Jones S.J.M."/>
            <person name="Koo H.L."/>
            <person name="Krzywinski M.I."/>
            <person name="Kwon-Chung K.J."/>
            <person name="Lengeler K.B."/>
            <person name="Maiti R."/>
            <person name="Marra M.A."/>
            <person name="Marra R.E."/>
            <person name="Mathewson C.A."/>
            <person name="Mitchell T.G."/>
            <person name="Pertea M."/>
            <person name="Riggs F.R."/>
            <person name="Salzberg S.L."/>
            <person name="Schein J.E."/>
            <person name="Shvartsbeyn A."/>
            <person name="Shin H."/>
            <person name="Shumway M."/>
            <person name="Specht C.A."/>
            <person name="Suh B.B."/>
            <person name="Tenney A."/>
            <person name="Utterback T.R."/>
            <person name="Wickes B.L."/>
            <person name="Wortman J.R."/>
            <person name="Wye N.H."/>
            <person name="Kronstad J.W."/>
            <person name="Lodge J.K."/>
            <person name="Heitman J."/>
            <person name="Davis R.W."/>
            <person name="Fraser C.M."/>
            <person name="Hyman R.W."/>
        </authorList>
    </citation>
    <scope>NUCLEOTIDE SEQUENCE [LARGE SCALE GENOMIC DNA]</scope>
    <source>
        <strain>JEC21 / ATCC MYA-565</strain>
    </source>
</reference>
<evidence type="ECO:0000250" key="1"/>
<evidence type="ECO:0000250" key="2">
    <source>
        <dbReference type="UniProtKB" id="O94446"/>
    </source>
</evidence>
<evidence type="ECO:0000250" key="3">
    <source>
        <dbReference type="UniProtKB" id="Q08649"/>
    </source>
</evidence>
<evidence type="ECO:0000255" key="4"/>
<evidence type="ECO:0000255" key="5">
    <source>
        <dbReference type="PROSITE-ProRule" id="PRU01063"/>
    </source>
</evidence>
<evidence type="ECO:0000256" key="6">
    <source>
        <dbReference type="SAM" id="MobiDB-lite"/>
    </source>
</evidence>
<evidence type="ECO:0000305" key="7"/>
<dbReference type="EC" id="2.3.1.48" evidence="3"/>
<dbReference type="EC" id="2.3.1.-" evidence="2 3"/>
<dbReference type="EMBL" id="AE017342">
    <property type="protein sequence ID" value="AAW41586.1"/>
    <property type="molecule type" value="Genomic_DNA"/>
</dbReference>
<dbReference type="RefSeq" id="XP_568893.1">
    <property type="nucleotide sequence ID" value="XM_568893.1"/>
</dbReference>
<dbReference type="SMR" id="P0CP02"/>
<dbReference type="FunCoup" id="P0CP02">
    <property type="interactions" value="710"/>
</dbReference>
<dbReference type="STRING" id="214684.P0CP02"/>
<dbReference type="PaxDb" id="214684-P0CP02"/>
<dbReference type="EnsemblFungi" id="AAW41586">
    <property type="protein sequence ID" value="AAW41586"/>
    <property type="gene ID" value="CNB03160"/>
</dbReference>
<dbReference type="VEuPathDB" id="FungiDB:CNB03160"/>
<dbReference type="eggNOG" id="KOG2747">
    <property type="taxonomic scope" value="Eukaryota"/>
</dbReference>
<dbReference type="HOGENOM" id="CLU_011815_2_0_1"/>
<dbReference type="InParanoid" id="P0CP02"/>
<dbReference type="OMA" id="QYQRHGY"/>
<dbReference type="OrthoDB" id="787137at2759"/>
<dbReference type="Proteomes" id="UP000002149">
    <property type="component" value="Chromosome 2"/>
</dbReference>
<dbReference type="GO" id="GO:0000785">
    <property type="term" value="C:chromatin"/>
    <property type="evidence" value="ECO:0000318"/>
    <property type="project" value="GO_Central"/>
</dbReference>
<dbReference type="GO" id="GO:0035267">
    <property type="term" value="C:NuA4 histone acetyltransferase complex"/>
    <property type="evidence" value="ECO:0007669"/>
    <property type="project" value="EnsemblFungi"/>
</dbReference>
<dbReference type="GO" id="GO:0005634">
    <property type="term" value="C:nucleus"/>
    <property type="evidence" value="ECO:0000318"/>
    <property type="project" value="GO_Central"/>
</dbReference>
<dbReference type="GO" id="GO:0005721">
    <property type="term" value="C:pericentric heterochromatin"/>
    <property type="evidence" value="ECO:0007669"/>
    <property type="project" value="EnsemblFungi"/>
</dbReference>
<dbReference type="GO" id="GO:0035861">
    <property type="term" value="C:site of double-strand break"/>
    <property type="evidence" value="ECO:0007669"/>
    <property type="project" value="EnsemblFungi"/>
</dbReference>
<dbReference type="GO" id="GO:0000812">
    <property type="term" value="C:Swr1 complex"/>
    <property type="evidence" value="ECO:0007669"/>
    <property type="project" value="EnsemblFungi"/>
</dbReference>
<dbReference type="GO" id="GO:0003682">
    <property type="term" value="F:chromatin binding"/>
    <property type="evidence" value="ECO:0000318"/>
    <property type="project" value="GO_Central"/>
</dbReference>
<dbReference type="GO" id="GO:0004402">
    <property type="term" value="F:histone acetyltransferase activity"/>
    <property type="evidence" value="ECO:0000318"/>
    <property type="project" value="GO_Central"/>
</dbReference>
<dbReference type="GO" id="GO:0044016">
    <property type="term" value="F:histone H3K4 acetyltransferase activity"/>
    <property type="evidence" value="ECO:0007669"/>
    <property type="project" value="EnsemblFungi"/>
</dbReference>
<dbReference type="GO" id="GO:0106226">
    <property type="term" value="F:peptide 2-hydroxyisobutyryltransferase activity"/>
    <property type="evidence" value="ECO:0007669"/>
    <property type="project" value="RHEA"/>
</dbReference>
<dbReference type="GO" id="GO:0140065">
    <property type="term" value="F:peptide butyryltransferase activity"/>
    <property type="evidence" value="ECO:0007669"/>
    <property type="project" value="EnsemblFungi"/>
</dbReference>
<dbReference type="GO" id="GO:0140064">
    <property type="term" value="F:peptide crotonyltransferase activity"/>
    <property type="evidence" value="ECO:0007669"/>
    <property type="project" value="RHEA"/>
</dbReference>
<dbReference type="GO" id="GO:0003712">
    <property type="term" value="F:transcription coregulator activity"/>
    <property type="evidence" value="ECO:0000318"/>
    <property type="project" value="GO_Central"/>
</dbReference>
<dbReference type="GO" id="GO:0008270">
    <property type="term" value="F:zinc ion binding"/>
    <property type="evidence" value="ECO:0007669"/>
    <property type="project" value="UniProtKB-KW"/>
</dbReference>
<dbReference type="GO" id="GO:0006281">
    <property type="term" value="P:DNA repair"/>
    <property type="evidence" value="ECO:0007669"/>
    <property type="project" value="UniProtKB-KW"/>
</dbReference>
<dbReference type="GO" id="GO:0140861">
    <property type="term" value="P:DNA repair-dependent chromatin remodeling"/>
    <property type="evidence" value="ECO:0007669"/>
    <property type="project" value="EnsemblFungi"/>
</dbReference>
<dbReference type="GO" id="GO:0031453">
    <property type="term" value="P:positive regulation of heterochromatin formation"/>
    <property type="evidence" value="ECO:0007669"/>
    <property type="project" value="EnsemblFungi"/>
</dbReference>
<dbReference type="GO" id="GO:0006357">
    <property type="term" value="P:regulation of transcription by RNA polymerase II"/>
    <property type="evidence" value="ECO:0000318"/>
    <property type="project" value="GO_Central"/>
</dbReference>
<dbReference type="CDD" id="cd04301">
    <property type="entry name" value="NAT_SF"/>
    <property type="match status" value="1"/>
</dbReference>
<dbReference type="FunFam" id="1.10.10.10:FF:000022">
    <property type="entry name" value="Histone acetyltransferase"/>
    <property type="match status" value="1"/>
</dbReference>
<dbReference type="FunFam" id="3.30.60.60:FF:000001">
    <property type="entry name" value="Histone acetyltransferase"/>
    <property type="match status" value="1"/>
</dbReference>
<dbReference type="FunFam" id="3.40.630.30:FF:000002">
    <property type="entry name" value="Histone acetyltransferase"/>
    <property type="match status" value="1"/>
</dbReference>
<dbReference type="Gene3D" id="2.30.30.140">
    <property type="match status" value="1"/>
</dbReference>
<dbReference type="Gene3D" id="3.40.630.30">
    <property type="match status" value="1"/>
</dbReference>
<dbReference type="Gene3D" id="3.30.60.60">
    <property type="entry name" value="N-acetyl transferase-like"/>
    <property type="match status" value="1"/>
</dbReference>
<dbReference type="Gene3D" id="1.10.10.10">
    <property type="entry name" value="Winged helix-like DNA-binding domain superfamily/Winged helix DNA-binding domain"/>
    <property type="match status" value="1"/>
</dbReference>
<dbReference type="InterPro" id="IPR016181">
    <property type="entry name" value="Acyl_CoA_acyltransferase"/>
</dbReference>
<dbReference type="InterPro" id="IPR016197">
    <property type="entry name" value="Chromo-like_dom_sf"/>
</dbReference>
<dbReference type="InterPro" id="IPR000953">
    <property type="entry name" value="Chromo/chromo_shadow_dom"/>
</dbReference>
<dbReference type="InterPro" id="IPR002717">
    <property type="entry name" value="HAT_MYST-type"/>
</dbReference>
<dbReference type="InterPro" id="IPR050603">
    <property type="entry name" value="MYST_HAT"/>
</dbReference>
<dbReference type="InterPro" id="IPR025995">
    <property type="entry name" value="Tudor-knot"/>
</dbReference>
<dbReference type="InterPro" id="IPR036388">
    <property type="entry name" value="WH-like_DNA-bd_sf"/>
</dbReference>
<dbReference type="InterPro" id="IPR040706">
    <property type="entry name" value="Zf-MYST"/>
</dbReference>
<dbReference type="PANTHER" id="PTHR10615">
    <property type="entry name" value="HISTONE ACETYLTRANSFERASE"/>
    <property type="match status" value="1"/>
</dbReference>
<dbReference type="PANTHER" id="PTHR10615:SF218">
    <property type="entry name" value="HISTONE ACETYLTRANSFERASE ESA1"/>
    <property type="match status" value="1"/>
</dbReference>
<dbReference type="Pfam" id="PF01853">
    <property type="entry name" value="MOZ_SAS"/>
    <property type="match status" value="1"/>
</dbReference>
<dbReference type="Pfam" id="PF11717">
    <property type="entry name" value="Tudor-knot"/>
    <property type="match status" value="1"/>
</dbReference>
<dbReference type="Pfam" id="PF17772">
    <property type="entry name" value="zf-MYST"/>
    <property type="match status" value="1"/>
</dbReference>
<dbReference type="SMART" id="SM00298">
    <property type="entry name" value="CHROMO"/>
    <property type="match status" value="1"/>
</dbReference>
<dbReference type="SUPFAM" id="SSF55729">
    <property type="entry name" value="Acyl-CoA N-acyltransferases (Nat)"/>
    <property type="match status" value="1"/>
</dbReference>
<dbReference type="SUPFAM" id="SSF54160">
    <property type="entry name" value="Chromo domain-like"/>
    <property type="match status" value="1"/>
</dbReference>
<dbReference type="PROSITE" id="PS51726">
    <property type="entry name" value="MYST_HAT"/>
    <property type="match status" value="1"/>
</dbReference>
<accession>P0CP02</accession>
<accession>Q55XW1</accession>
<accession>Q5KM33</accession>